<evidence type="ECO:0000255" key="1">
    <source>
        <dbReference type="HAMAP-Rule" id="MF_01341"/>
    </source>
</evidence>
<evidence type="ECO:0000256" key="2">
    <source>
        <dbReference type="SAM" id="MobiDB-lite"/>
    </source>
</evidence>
<evidence type="ECO:0000305" key="3"/>
<name>RL15_RUEST</name>
<comment type="function">
    <text evidence="1">Binds to the 23S rRNA.</text>
</comment>
<comment type="subunit">
    <text evidence="1">Part of the 50S ribosomal subunit.</text>
</comment>
<comment type="similarity">
    <text evidence="1">Belongs to the universal ribosomal protein uL15 family.</text>
</comment>
<keyword id="KW-1185">Reference proteome</keyword>
<keyword id="KW-0687">Ribonucleoprotein</keyword>
<keyword id="KW-0689">Ribosomal protein</keyword>
<keyword id="KW-0694">RNA-binding</keyword>
<keyword id="KW-0699">rRNA-binding</keyword>
<reference key="1">
    <citation type="submission" date="2006-05" db="EMBL/GenBank/DDBJ databases">
        <title>Complete sequence of chromosome of Silicibacter sp. TM1040.</title>
        <authorList>
            <consortium name="US DOE Joint Genome Institute"/>
            <person name="Copeland A."/>
            <person name="Lucas S."/>
            <person name="Lapidus A."/>
            <person name="Barry K."/>
            <person name="Detter J.C."/>
            <person name="Glavina del Rio T."/>
            <person name="Hammon N."/>
            <person name="Israni S."/>
            <person name="Dalin E."/>
            <person name="Tice H."/>
            <person name="Pitluck S."/>
            <person name="Brettin T."/>
            <person name="Bruce D."/>
            <person name="Han C."/>
            <person name="Tapia R."/>
            <person name="Goodwin L."/>
            <person name="Thompson L.S."/>
            <person name="Gilna P."/>
            <person name="Schmutz J."/>
            <person name="Larimer F."/>
            <person name="Land M."/>
            <person name="Hauser L."/>
            <person name="Kyrpides N."/>
            <person name="Kim E."/>
            <person name="Belas R."/>
            <person name="Moran M.A."/>
            <person name="Buchan A."/>
            <person name="Gonzalez J.M."/>
            <person name="Schell M.A."/>
            <person name="Sun F."/>
            <person name="Richardson P."/>
        </authorList>
    </citation>
    <scope>NUCLEOTIDE SEQUENCE [LARGE SCALE GENOMIC DNA]</scope>
    <source>
        <strain>TM1040</strain>
    </source>
</reference>
<dbReference type="EMBL" id="CP000377">
    <property type="protein sequence ID" value="ABF63007.1"/>
    <property type="molecule type" value="Genomic_DNA"/>
</dbReference>
<dbReference type="RefSeq" id="WP_011537623.1">
    <property type="nucleotide sequence ID" value="NC_008044.1"/>
</dbReference>
<dbReference type="SMR" id="Q1GK09"/>
<dbReference type="STRING" id="292414.TM1040_0274"/>
<dbReference type="KEGG" id="sit:TM1040_0274"/>
<dbReference type="eggNOG" id="COG0200">
    <property type="taxonomic scope" value="Bacteria"/>
</dbReference>
<dbReference type="HOGENOM" id="CLU_055188_4_0_5"/>
<dbReference type="OrthoDB" id="9810293at2"/>
<dbReference type="Proteomes" id="UP000000636">
    <property type="component" value="Chromosome"/>
</dbReference>
<dbReference type="GO" id="GO:0015934">
    <property type="term" value="C:large ribosomal subunit"/>
    <property type="evidence" value="ECO:0007669"/>
    <property type="project" value="InterPro"/>
</dbReference>
<dbReference type="GO" id="GO:0019843">
    <property type="term" value="F:rRNA binding"/>
    <property type="evidence" value="ECO:0007669"/>
    <property type="project" value="UniProtKB-UniRule"/>
</dbReference>
<dbReference type="GO" id="GO:0003735">
    <property type="term" value="F:structural constituent of ribosome"/>
    <property type="evidence" value="ECO:0007669"/>
    <property type="project" value="InterPro"/>
</dbReference>
<dbReference type="GO" id="GO:0006412">
    <property type="term" value="P:translation"/>
    <property type="evidence" value="ECO:0007669"/>
    <property type="project" value="UniProtKB-UniRule"/>
</dbReference>
<dbReference type="Gene3D" id="3.100.10.10">
    <property type="match status" value="1"/>
</dbReference>
<dbReference type="HAMAP" id="MF_01341">
    <property type="entry name" value="Ribosomal_uL15"/>
    <property type="match status" value="1"/>
</dbReference>
<dbReference type="InterPro" id="IPR030878">
    <property type="entry name" value="Ribosomal_uL15"/>
</dbReference>
<dbReference type="InterPro" id="IPR021131">
    <property type="entry name" value="Ribosomal_uL15/eL18"/>
</dbReference>
<dbReference type="InterPro" id="IPR036227">
    <property type="entry name" value="Ribosomal_uL15/eL18_sf"/>
</dbReference>
<dbReference type="InterPro" id="IPR005749">
    <property type="entry name" value="Ribosomal_uL15_bac-type"/>
</dbReference>
<dbReference type="NCBIfam" id="TIGR01071">
    <property type="entry name" value="rplO_bact"/>
    <property type="match status" value="1"/>
</dbReference>
<dbReference type="PANTHER" id="PTHR12934">
    <property type="entry name" value="50S RIBOSOMAL PROTEIN L15"/>
    <property type="match status" value="1"/>
</dbReference>
<dbReference type="PANTHER" id="PTHR12934:SF11">
    <property type="entry name" value="LARGE RIBOSOMAL SUBUNIT PROTEIN UL15M"/>
    <property type="match status" value="1"/>
</dbReference>
<dbReference type="Pfam" id="PF00828">
    <property type="entry name" value="Ribosomal_L27A"/>
    <property type="match status" value="1"/>
</dbReference>
<dbReference type="SUPFAM" id="SSF52080">
    <property type="entry name" value="Ribosomal proteins L15p and L18e"/>
    <property type="match status" value="1"/>
</dbReference>
<proteinExistence type="inferred from homology"/>
<protein>
    <recommendedName>
        <fullName evidence="1">Large ribosomal subunit protein uL15</fullName>
    </recommendedName>
    <alternativeName>
        <fullName evidence="3">50S ribosomal protein L15</fullName>
    </alternativeName>
</protein>
<organism>
    <name type="scientific">Ruegeria sp. (strain TM1040)</name>
    <name type="common">Silicibacter sp.</name>
    <dbReference type="NCBI Taxonomy" id="292414"/>
    <lineage>
        <taxon>Bacteria</taxon>
        <taxon>Pseudomonadati</taxon>
        <taxon>Pseudomonadota</taxon>
        <taxon>Alphaproteobacteria</taxon>
        <taxon>Rhodobacterales</taxon>
        <taxon>Roseobacteraceae</taxon>
        <taxon>Ruegeria</taxon>
    </lineage>
</organism>
<sequence length="156" mass="16109">MKLNELRDNPGASPKRTRVGRGPGSGKGKMGGRGIKGQKSRSGVAINGYEGGQMPLYQRLPKRGFNKPNAKKYAVVNLGLIQKFIDAGKLDAASITEDSLVASGLVRRKLDGIRVLAKGEFTAKATIAVTGASKSAVEAVSKAGGALTVASEAAAE</sequence>
<gene>
    <name evidence="1" type="primary">rplO</name>
    <name type="ordered locus">TM1040_0274</name>
</gene>
<feature type="chain" id="PRO_0000251563" description="Large ribosomal subunit protein uL15">
    <location>
        <begin position="1"/>
        <end position="156"/>
    </location>
</feature>
<feature type="region of interest" description="Disordered" evidence="2">
    <location>
        <begin position="1"/>
        <end position="44"/>
    </location>
</feature>
<feature type="compositionally biased region" description="Gly residues" evidence="2">
    <location>
        <begin position="21"/>
        <end position="35"/>
    </location>
</feature>
<accession>Q1GK09</accession>